<evidence type="ECO:0000305" key="1"/>
<name>HCY3_MAJSQ</name>
<dbReference type="GO" id="GO:0005576">
    <property type="term" value="C:extracellular region"/>
    <property type="evidence" value="ECO:0007669"/>
    <property type="project" value="UniProtKB-SubCell"/>
</dbReference>
<dbReference type="GO" id="GO:0005344">
    <property type="term" value="F:oxygen carrier activity"/>
    <property type="evidence" value="ECO:0007669"/>
    <property type="project" value="UniProtKB-KW"/>
</dbReference>
<comment type="function">
    <text>Hemocyanins are copper-containing oxygen carriers occurring freely dissolved in the hemolymph of many mollusks and arthropods.</text>
</comment>
<comment type="subcellular location">
    <subcellularLocation>
        <location>Secreted</location>
        <location>Extracellular space</location>
    </subcellularLocation>
</comment>
<comment type="tissue specificity">
    <text>Hemolymph.</text>
</comment>
<comment type="similarity">
    <text evidence="1">Belongs to the tyrosinase family. Hemocyanin subfamily.</text>
</comment>
<keyword id="KW-0186">Copper</keyword>
<keyword id="KW-0903">Direct protein sequencing</keyword>
<keyword id="KW-0561">Oxygen transport</keyword>
<keyword id="KW-0964">Secreted</keyword>
<keyword id="KW-0813">Transport</keyword>
<reference evidence="1" key="1">
    <citation type="journal article" date="1999" name="Comp. Biochem. Physiol.">
        <title>Subunit composition and N-terminal analysis of arthropod hemocyanins.</title>
        <authorList>
            <person name="Stoeva S."/>
            <person name="Dolashka P."/>
            <person name="Hristova R."/>
            <person name="Genov N."/>
            <person name="Voelter W."/>
        </authorList>
    </citation>
    <scope>PROTEIN SEQUENCE</scope>
</reference>
<organism evidence="1">
    <name type="scientific">Maja squinado</name>
    <name type="common">Mediterranean spider crab</name>
    <name type="synonym">Cancer squinado</name>
    <dbReference type="NCBI Taxonomy" id="99391"/>
    <lineage>
        <taxon>Eukaryota</taxon>
        <taxon>Metazoa</taxon>
        <taxon>Ecdysozoa</taxon>
        <taxon>Arthropoda</taxon>
        <taxon>Crustacea</taxon>
        <taxon>Multicrustacea</taxon>
        <taxon>Malacostraca</taxon>
        <taxon>Eumalacostraca</taxon>
        <taxon>Eucarida</taxon>
        <taxon>Decapoda</taxon>
        <taxon>Pleocyemata</taxon>
        <taxon>Brachyura</taxon>
        <taxon>Eubrachyura</taxon>
        <taxon>Majoidea</taxon>
        <taxon>Majidae</taxon>
        <taxon>Maja</taxon>
    </lineage>
</organism>
<feature type="chain" id="PRO_0000204284" description="Hemocyanin subunit 3">
    <location>
        <begin position="1"/>
        <end position="25" status="greater than"/>
    </location>
</feature>
<feature type="non-terminal residue" evidence="1">
    <location>
        <position position="25"/>
    </location>
</feature>
<protein>
    <recommendedName>
        <fullName>Hemocyanin subunit 3</fullName>
    </recommendedName>
</protein>
<proteinExistence type="evidence at protein level"/>
<sequence length="25" mass="2689">GGPAGKQNAVNQLLVLIYDPKSYKD</sequence>
<accession>P82304</accession>